<feature type="chain" id="PRO_1000143934" description="Large ribosomal subunit protein uL6">
    <location>
        <begin position="1"/>
        <end position="174"/>
    </location>
</feature>
<evidence type="ECO:0000255" key="1">
    <source>
        <dbReference type="HAMAP-Rule" id="MF_01365"/>
    </source>
</evidence>
<evidence type="ECO:0000305" key="2"/>
<name>RL6_ACIF2</name>
<proteinExistence type="inferred from homology"/>
<reference key="1">
    <citation type="journal article" date="2008" name="BMC Genomics">
        <title>Acidithiobacillus ferrooxidans metabolism: from genome sequence to industrial applications.</title>
        <authorList>
            <person name="Valdes J."/>
            <person name="Pedroso I."/>
            <person name="Quatrini R."/>
            <person name="Dodson R.J."/>
            <person name="Tettelin H."/>
            <person name="Blake R. II"/>
            <person name="Eisen J.A."/>
            <person name="Holmes D.S."/>
        </authorList>
    </citation>
    <scope>NUCLEOTIDE SEQUENCE [LARGE SCALE GENOMIC DNA]</scope>
    <source>
        <strain>ATCC 23270 / DSM 14882 / CIP 104768 / NCIMB 8455</strain>
    </source>
</reference>
<accession>B7J482</accession>
<sequence>MSRVAKQPVPLPKGVEVHVADQRLVVKGPKGEMSVPFHPAVELRIDDGGASLTWSDNQNAQAGTMRAILNNMVQGVSQGYEQKLEIIGVGYRAQAKGKTLSLSLGFSHPVDYSVPDDITIETPTQTEIVIRGIDKQKIGQIAADIRAYRPPEPYKGKGVRYAGENVRRKEAKKK</sequence>
<comment type="function">
    <text evidence="1">This protein binds to the 23S rRNA, and is important in its secondary structure. It is located near the subunit interface in the base of the L7/L12 stalk, and near the tRNA binding site of the peptidyltransferase center.</text>
</comment>
<comment type="subunit">
    <text evidence="1">Part of the 50S ribosomal subunit.</text>
</comment>
<comment type="similarity">
    <text evidence="1">Belongs to the universal ribosomal protein uL6 family.</text>
</comment>
<dbReference type="EMBL" id="CP001219">
    <property type="protein sequence ID" value="ACK79883.1"/>
    <property type="molecule type" value="Genomic_DNA"/>
</dbReference>
<dbReference type="RefSeq" id="WP_012536092.1">
    <property type="nucleotide sequence ID" value="NC_011761.1"/>
</dbReference>
<dbReference type="SMR" id="B7J482"/>
<dbReference type="STRING" id="243159.AFE_0342"/>
<dbReference type="PaxDb" id="243159-AFE_0342"/>
<dbReference type="GeneID" id="65279720"/>
<dbReference type="KEGG" id="afr:AFE_0342"/>
<dbReference type="eggNOG" id="COG0097">
    <property type="taxonomic scope" value="Bacteria"/>
</dbReference>
<dbReference type="HOGENOM" id="CLU_065464_1_2_6"/>
<dbReference type="Proteomes" id="UP000001362">
    <property type="component" value="Chromosome"/>
</dbReference>
<dbReference type="GO" id="GO:0022625">
    <property type="term" value="C:cytosolic large ribosomal subunit"/>
    <property type="evidence" value="ECO:0007669"/>
    <property type="project" value="TreeGrafter"/>
</dbReference>
<dbReference type="GO" id="GO:0019843">
    <property type="term" value="F:rRNA binding"/>
    <property type="evidence" value="ECO:0007669"/>
    <property type="project" value="UniProtKB-UniRule"/>
</dbReference>
<dbReference type="GO" id="GO:0003735">
    <property type="term" value="F:structural constituent of ribosome"/>
    <property type="evidence" value="ECO:0007669"/>
    <property type="project" value="InterPro"/>
</dbReference>
<dbReference type="GO" id="GO:0002181">
    <property type="term" value="P:cytoplasmic translation"/>
    <property type="evidence" value="ECO:0007669"/>
    <property type="project" value="TreeGrafter"/>
</dbReference>
<dbReference type="FunFam" id="3.90.930.12:FF:000001">
    <property type="entry name" value="50S ribosomal protein L6"/>
    <property type="match status" value="1"/>
</dbReference>
<dbReference type="Gene3D" id="3.90.930.12">
    <property type="entry name" value="Ribosomal protein L6, alpha-beta domain"/>
    <property type="match status" value="2"/>
</dbReference>
<dbReference type="HAMAP" id="MF_01365_B">
    <property type="entry name" value="Ribosomal_uL6_B"/>
    <property type="match status" value="1"/>
</dbReference>
<dbReference type="InterPro" id="IPR000702">
    <property type="entry name" value="Ribosomal_uL6-like"/>
</dbReference>
<dbReference type="InterPro" id="IPR036789">
    <property type="entry name" value="Ribosomal_uL6-like_a/b-dom_sf"/>
</dbReference>
<dbReference type="InterPro" id="IPR020040">
    <property type="entry name" value="Ribosomal_uL6_a/b-dom"/>
</dbReference>
<dbReference type="InterPro" id="IPR019906">
    <property type="entry name" value="Ribosomal_uL6_bac-type"/>
</dbReference>
<dbReference type="InterPro" id="IPR002358">
    <property type="entry name" value="Ribosomal_uL6_CS"/>
</dbReference>
<dbReference type="NCBIfam" id="TIGR03654">
    <property type="entry name" value="L6_bact"/>
    <property type="match status" value="1"/>
</dbReference>
<dbReference type="PANTHER" id="PTHR11655">
    <property type="entry name" value="60S/50S RIBOSOMAL PROTEIN L6/L9"/>
    <property type="match status" value="1"/>
</dbReference>
<dbReference type="PANTHER" id="PTHR11655:SF14">
    <property type="entry name" value="LARGE RIBOSOMAL SUBUNIT PROTEIN UL6M"/>
    <property type="match status" value="1"/>
</dbReference>
<dbReference type="Pfam" id="PF00347">
    <property type="entry name" value="Ribosomal_L6"/>
    <property type="match status" value="2"/>
</dbReference>
<dbReference type="PIRSF" id="PIRSF002162">
    <property type="entry name" value="Ribosomal_L6"/>
    <property type="match status" value="1"/>
</dbReference>
<dbReference type="PRINTS" id="PR00059">
    <property type="entry name" value="RIBOSOMALL6"/>
</dbReference>
<dbReference type="SUPFAM" id="SSF56053">
    <property type="entry name" value="Ribosomal protein L6"/>
    <property type="match status" value="2"/>
</dbReference>
<dbReference type="PROSITE" id="PS00525">
    <property type="entry name" value="RIBOSOMAL_L6_1"/>
    <property type="match status" value="1"/>
</dbReference>
<organism>
    <name type="scientific">Acidithiobacillus ferrooxidans (strain ATCC 23270 / DSM 14882 / CIP 104768 / NCIMB 8455)</name>
    <name type="common">Ferrobacillus ferrooxidans (strain ATCC 23270)</name>
    <dbReference type="NCBI Taxonomy" id="243159"/>
    <lineage>
        <taxon>Bacteria</taxon>
        <taxon>Pseudomonadati</taxon>
        <taxon>Pseudomonadota</taxon>
        <taxon>Acidithiobacillia</taxon>
        <taxon>Acidithiobacillales</taxon>
        <taxon>Acidithiobacillaceae</taxon>
        <taxon>Acidithiobacillus</taxon>
    </lineage>
</organism>
<keyword id="KW-1185">Reference proteome</keyword>
<keyword id="KW-0687">Ribonucleoprotein</keyword>
<keyword id="KW-0689">Ribosomal protein</keyword>
<keyword id="KW-0694">RNA-binding</keyword>
<keyword id="KW-0699">rRNA-binding</keyword>
<gene>
    <name evidence="1" type="primary">rplF</name>
    <name type="ordered locus">AFE_0342</name>
</gene>
<protein>
    <recommendedName>
        <fullName evidence="1">Large ribosomal subunit protein uL6</fullName>
    </recommendedName>
    <alternativeName>
        <fullName evidence="2">50S ribosomal protein L6</fullName>
    </alternativeName>
</protein>